<proteinExistence type="inferred from homology"/>
<protein>
    <recommendedName>
        <fullName evidence="1">Ribonuclease Z</fullName>
        <shortName evidence="1">RNase Z</shortName>
        <ecNumber evidence="1">3.1.26.11</ecNumber>
    </recommendedName>
    <alternativeName>
        <fullName evidence="1">tRNA 3 endonuclease</fullName>
    </alternativeName>
    <alternativeName>
        <fullName evidence="1">tRNase Z</fullName>
    </alternativeName>
</protein>
<keyword id="KW-0255">Endonuclease</keyword>
<keyword id="KW-0378">Hydrolase</keyword>
<keyword id="KW-0479">Metal-binding</keyword>
<keyword id="KW-0540">Nuclease</keyword>
<keyword id="KW-1185">Reference proteome</keyword>
<keyword id="KW-0819">tRNA processing</keyword>
<keyword id="KW-0862">Zinc</keyword>
<sequence>MQLEFLGTGSGQPSKFRNVTSIALRLLDERNAVWLFDVGEATQHQILKTTLRPRKVEKIFITHLHGDHIFGLPGFLSSRSFQGADKNEPLTIYGPKGVKEFVQTALRISETRLSYPIEYVDLTEGVIFEDHTFQVVAAPMRHRIETWGFRVIEKDHPGELLVDKLKQGNIPSGPVYGQLKAGKTVTLPDGRIVNGHDFIGKAQKGRIVTFILDTRPNDNVEWLAKNADVLVHESTYGSSEEEAKMAKAHAHSTSANAASVARRAHVNKLVLTHLSARYIGPMVKELIHDVRRNFANTYVARDFDIIDIPFKKDSNESK</sequence>
<organism>
    <name type="scientific">Leuconostoc mesenteroides subsp. mesenteroides (strain ATCC 8293 / DSM 20343 / BCRC 11652 / CCM 1803 / JCM 6124 / NCDO 523 / NBRC 100496 / NCIMB 8023 / NCTC 12954 / NRRL B-1118 / 37Y)</name>
    <dbReference type="NCBI Taxonomy" id="203120"/>
    <lineage>
        <taxon>Bacteria</taxon>
        <taxon>Bacillati</taxon>
        <taxon>Bacillota</taxon>
        <taxon>Bacilli</taxon>
        <taxon>Lactobacillales</taxon>
        <taxon>Lactobacillaceae</taxon>
        <taxon>Leuconostoc</taxon>
    </lineage>
</organism>
<reference key="1">
    <citation type="journal article" date="2006" name="Proc. Natl. Acad. Sci. U.S.A.">
        <title>Comparative genomics of the lactic acid bacteria.</title>
        <authorList>
            <person name="Makarova K.S."/>
            <person name="Slesarev A."/>
            <person name="Wolf Y.I."/>
            <person name="Sorokin A."/>
            <person name="Mirkin B."/>
            <person name="Koonin E.V."/>
            <person name="Pavlov A."/>
            <person name="Pavlova N."/>
            <person name="Karamychev V."/>
            <person name="Polouchine N."/>
            <person name="Shakhova V."/>
            <person name="Grigoriev I."/>
            <person name="Lou Y."/>
            <person name="Rohksar D."/>
            <person name="Lucas S."/>
            <person name="Huang K."/>
            <person name="Goodstein D.M."/>
            <person name="Hawkins T."/>
            <person name="Plengvidhya V."/>
            <person name="Welker D."/>
            <person name="Hughes J."/>
            <person name="Goh Y."/>
            <person name="Benson A."/>
            <person name="Baldwin K."/>
            <person name="Lee J.-H."/>
            <person name="Diaz-Muniz I."/>
            <person name="Dosti B."/>
            <person name="Smeianov V."/>
            <person name="Wechter W."/>
            <person name="Barabote R."/>
            <person name="Lorca G."/>
            <person name="Altermann E."/>
            <person name="Barrangou R."/>
            <person name="Ganesan B."/>
            <person name="Xie Y."/>
            <person name="Rawsthorne H."/>
            <person name="Tamir D."/>
            <person name="Parker C."/>
            <person name="Breidt F."/>
            <person name="Broadbent J.R."/>
            <person name="Hutkins R."/>
            <person name="O'Sullivan D."/>
            <person name="Steele J."/>
            <person name="Unlu G."/>
            <person name="Saier M.H. Jr."/>
            <person name="Klaenhammer T."/>
            <person name="Richardson P."/>
            <person name="Kozyavkin S."/>
            <person name="Weimer B.C."/>
            <person name="Mills D.A."/>
        </authorList>
    </citation>
    <scope>NUCLEOTIDE SEQUENCE [LARGE SCALE GENOMIC DNA]</scope>
    <source>
        <strain>ATCC 8293 / DSM 20343 / BCRC 11652 / CCM 1803 / JCM 6124 / NCDO 523 / NBRC 100496 / NCIMB 8023 / NCTC 12954 / NRRL B-1118 / 37Y</strain>
    </source>
</reference>
<name>RNZ_LEUMM</name>
<feature type="chain" id="PRO_1000070294" description="Ribonuclease Z">
    <location>
        <begin position="1"/>
        <end position="318"/>
    </location>
</feature>
<feature type="active site" description="Proton acceptor" evidence="1">
    <location>
        <position position="67"/>
    </location>
</feature>
<feature type="binding site" evidence="1">
    <location>
        <position position="63"/>
    </location>
    <ligand>
        <name>Zn(2+)</name>
        <dbReference type="ChEBI" id="CHEBI:29105"/>
        <label>1</label>
        <note>catalytic</note>
    </ligand>
</feature>
<feature type="binding site" evidence="1">
    <location>
        <position position="65"/>
    </location>
    <ligand>
        <name>Zn(2+)</name>
        <dbReference type="ChEBI" id="CHEBI:29105"/>
        <label>1</label>
        <note>catalytic</note>
    </ligand>
</feature>
<feature type="binding site" evidence="1">
    <location>
        <position position="67"/>
    </location>
    <ligand>
        <name>Zn(2+)</name>
        <dbReference type="ChEBI" id="CHEBI:29105"/>
        <label>2</label>
        <note>catalytic</note>
    </ligand>
</feature>
<feature type="binding site" evidence="1">
    <location>
        <position position="68"/>
    </location>
    <ligand>
        <name>Zn(2+)</name>
        <dbReference type="ChEBI" id="CHEBI:29105"/>
        <label>2</label>
        <note>catalytic</note>
    </ligand>
</feature>
<feature type="binding site" evidence="1">
    <location>
        <position position="142"/>
    </location>
    <ligand>
        <name>Zn(2+)</name>
        <dbReference type="ChEBI" id="CHEBI:29105"/>
        <label>1</label>
        <note>catalytic</note>
    </ligand>
</feature>
<feature type="binding site" evidence="1">
    <location>
        <position position="213"/>
    </location>
    <ligand>
        <name>Zn(2+)</name>
        <dbReference type="ChEBI" id="CHEBI:29105"/>
        <label>1</label>
        <note>catalytic</note>
    </ligand>
</feature>
<feature type="binding site" evidence="1">
    <location>
        <position position="213"/>
    </location>
    <ligand>
        <name>Zn(2+)</name>
        <dbReference type="ChEBI" id="CHEBI:29105"/>
        <label>2</label>
        <note>catalytic</note>
    </ligand>
</feature>
<feature type="binding site" evidence="1">
    <location>
        <position position="273"/>
    </location>
    <ligand>
        <name>Zn(2+)</name>
        <dbReference type="ChEBI" id="CHEBI:29105"/>
        <label>2</label>
        <note>catalytic</note>
    </ligand>
</feature>
<gene>
    <name evidence="1" type="primary">rnz</name>
    <name type="ordered locus">LEUM_1475</name>
</gene>
<evidence type="ECO:0000255" key="1">
    <source>
        <dbReference type="HAMAP-Rule" id="MF_01818"/>
    </source>
</evidence>
<comment type="function">
    <text evidence="1">Zinc phosphodiesterase, which displays some tRNA 3'-processing endonuclease activity. Probably involved in tRNA maturation, by removing a 3'-trailer from precursor tRNA.</text>
</comment>
<comment type="catalytic activity">
    <reaction evidence="1">
        <text>Endonucleolytic cleavage of RNA, removing extra 3' nucleotides from tRNA precursor, generating 3' termini of tRNAs. A 3'-hydroxy group is left at the tRNA terminus and a 5'-phosphoryl group is left at the trailer molecule.</text>
        <dbReference type="EC" id="3.1.26.11"/>
    </reaction>
</comment>
<comment type="cofactor">
    <cofactor evidence="1">
        <name>Zn(2+)</name>
        <dbReference type="ChEBI" id="CHEBI:29105"/>
    </cofactor>
    <text evidence="1">Binds 2 Zn(2+) ions.</text>
</comment>
<comment type="subunit">
    <text evidence="1">Homodimer.</text>
</comment>
<comment type="similarity">
    <text evidence="1">Belongs to the RNase Z family.</text>
</comment>
<accession>Q03W55</accession>
<dbReference type="EC" id="3.1.26.11" evidence="1"/>
<dbReference type="EMBL" id="CP000414">
    <property type="protein sequence ID" value="ABJ62567.1"/>
    <property type="molecule type" value="Genomic_DNA"/>
</dbReference>
<dbReference type="RefSeq" id="WP_011680155.1">
    <property type="nucleotide sequence ID" value="NC_008531.1"/>
</dbReference>
<dbReference type="SMR" id="Q03W55"/>
<dbReference type="EnsemblBacteria" id="ABJ62567">
    <property type="protein sequence ID" value="ABJ62567"/>
    <property type="gene ID" value="LEUM_1475"/>
</dbReference>
<dbReference type="GeneID" id="29575814"/>
<dbReference type="KEGG" id="lme:LEUM_1475"/>
<dbReference type="eggNOG" id="COG1234">
    <property type="taxonomic scope" value="Bacteria"/>
</dbReference>
<dbReference type="HOGENOM" id="CLU_031317_2_0_9"/>
<dbReference type="Proteomes" id="UP000000362">
    <property type="component" value="Chromosome"/>
</dbReference>
<dbReference type="GO" id="GO:0042781">
    <property type="term" value="F:3'-tRNA processing endoribonuclease activity"/>
    <property type="evidence" value="ECO:0007669"/>
    <property type="project" value="UniProtKB-UniRule"/>
</dbReference>
<dbReference type="GO" id="GO:0008270">
    <property type="term" value="F:zinc ion binding"/>
    <property type="evidence" value="ECO:0007669"/>
    <property type="project" value="UniProtKB-UniRule"/>
</dbReference>
<dbReference type="CDD" id="cd07717">
    <property type="entry name" value="RNaseZ_ZiPD-like_MBL-fold"/>
    <property type="match status" value="1"/>
</dbReference>
<dbReference type="FunFam" id="3.60.15.10:FF:000002">
    <property type="entry name" value="Ribonuclease Z"/>
    <property type="match status" value="1"/>
</dbReference>
<dbReference type="Gene3D" id="3.60.15.10">
    <property type="entry name" value="Ribonuclease Z/Hydroxyacylglutathione hydrolase-like"/>
    <property type="match status" value="1"/>
</dbReference>
<dbReference type="HAMAP" id="MF_01818">
    <property type="entry name" value="RNase_Z_BN"/>
    <property type="match status" value="1"/>
</dbReference>
<dbReference type="InterPro" id="IPR001279">
    <property type="entry name" value="Metallo-B-lactamas"/>
</dbReference>
<dbReference type="InterPro" id="IPR036866">
    <property type="entry name" value="RibonucZ/Hydroxyglut_hydro"/>
</dbReference>
<dbReference type="InterPro" id="IPR013471">
    <property type="entry name" value="RNase_Z/BN"/>
</dbReference>
<dbReference type="NCBIfam" id="NF000801">
    <property type="entry name" value="PRK00055.1-3"/>
    <property type="match status" value="1"/>
</dbReference>
<dbReference type="NCBIfam" id="TIGR02651">
    <property type="entry name" value="RNase_Z"/>
    <property type="match status" value="1"/>
</dbReference>
<dbReference type="PANTHER" id="PTHR46018">
    <property type="entry name" value="ZINC PHOSPHODIESTERASE ELAC PROTEIN 1"/>
    <property type="match status" value="1"/>
</dbReference>
<dbReference type="PANTHER" id="PTHR46018:SF2">
    <property type="entry name" value="ZINC PHOSPHODIESTERASE ELAC PROTEIN 1"/>
    <property type="match status" value="1"/>
</dbReference>
<dbReference type="Pfam" id="PF00753">
    <property type="entry name" value="Lactamase_B"/>
    <property type="match status" value="1"/>
</dbReference>
<dbReference type="SMART" id="SM00849">
    <property type="entry name" value="Lactamase_B"/>
    <property type="match status" value="1"/>
</dbReference>
<dbReference type="SUPFAM" id="SSF56281">
    <property type="entry name" value="Metallo-hydrolase/oxidoreductase"/>
    <property type="match status" value="1"/>
</dbReference>